<comment type="function">
    <text evidence="1">Catalyzes the formation of N(4)-acetylcytidine (ac(4)C) at the wobble position of elongator tRNA(Met), using acetate and ATP as substrates. First activates an acetate ion to form acetyladenylate (Ac-AMP) and then transfers the acetyl group to tRNA to form ac(4)C34.</text>
</comment>
<comment type="catalytic activity">
    <reaction evidence="1">
        <text>cytidine(34) in elongator tRNA(Met) + acetate + ATP = N(4)-acetylcytidine(34) in elongator tRNA(Met) + AMP + diphosphate</text>
        <dbReference type="Rhea" id="RHEA:58144"/>
        <dbReference type="Rhea" id="RHEA-COMP:10693"/>
        <dbReference type="Rhea" id="RHEA-COMP:10694"/>
        <dbReference type="ChEBI" id="CHEBI:30089"/>
        <dbReference type="ChEBI" id="CHEBI:30616"/>
        <dbReference type="ChEBI" id="CHEBI:33019"/>
        <dbReference type="ChEBI" id="CHEBI:74900"/>
        <dbReference type="ChEBI" id="CHEBI:82748"/>
        <dbReference type="ChEBI" id="CHEBI:456215"/>
    </reaction>
</comment>
<comment type="subcellular location">
    <subcellularLocation>
        <location evidence="1">Cytoplasm</location>
    </subcellularLocation>
</comment>
<comment type="similarity">
    <text evidence="1">Belongs to the TmcAL family.</text>
</comment>
<protein>
    <recommendedName>
        <fullName evidence="1">tRNA(Met) cytidine acetate ligase</fullName>
        <ecNumber evidence="1">6.3.4.-</ecNumber>
    </recommendedName>
</protein>
<keyword id="KW-0067">ATP-binding</keyword>
<keyword id="KW-0963">Cytoplasm</keyword>
<keyword id="KW-0436">Ligase</keyword>
<keyword id="KW-0547">Nucleotide-binding</keyword>
<keyword id="KW-1185">Reference proteome</keyword>
<keyword id="KW-0694">RNA-binding</keyword>
<keyword id="KW-0819">tRNA processing</keyword>
<keyword id="KW-0820">tRNA-binding</keyword>
<name>TMCAL_STAA8</name>
<gene>
    <name evidence="1" type="primary">tmcAL</name>
    <name type="ordered locus">SAOUHSC_01076</name>
</gene>
<feature type="chain" id="PRO_0000300188" description="tRNA(Met) cytidine acetate ligase">
    <location>
        <begin position="1"/>
        <end position="379"/>
    </location>
</feature>
<feature type="binding site" evidence="1">
    <location>
        <begin position="7"/>
        <end position="20"/>
    </location>
    <ligand>
        <name>ATP</name>
        <dbReference type="ChEBI" id="CHEBI:30616"/>
    </ligand>
</feature>
<feature type="binding site" evidence="1">
    <location>
        <position position="100"/>
    </location>
    <ligand>
        <name>ATP</name>
        <dbReference type="ChEBI" id="CHEBI:30616"/>
    </ligand>
</feature>
<feature type="binding site" evidence="1">
    <location>
        <position position="153"/>
    </location>
    <ligand>
        <name>ATP</name>
        <dbReference type="ChEBI" id="CHEBI:30616"/>
    </ligand>
</feature>
<feature type="binding site" evidence="1">
    <location>
        <position position="178"/>
    </location>
    <ligand>
        <name>ATP</name>
        <dbReference type="ChEBI" id="CHEBI:30616"/>
    </ligand>
</feature>
<sequence length="379" mass="43240">MKSVGLITEYNPFHNGHQYHINQSKKLTNADVTIAIMSGNFVMRGEPAIYNKFTRAKMALSTADLVIELPATASLSSGDHFAELAVKVADYMSVDTIAFGSENNDIKTLKQLAHSINEIEQSESFSQKVKEGKSYPRIISELLEHHEALASPNNILGISYLKAIAKNAKNINAISIKRENAQHHDSLIQHHQFASGTSIRTSIISQDDHWHHVVPKDIQHLYVTPHITLNQIFPYLKYQIIAMTTDSLKNIYTVTEGFENRLKSNIYEATDFHHFVKLLKTKRYTYTHIQRLLMNVLLNIKPTDVTSNIHAVKVLAMNDRGRQYLKHLKTAFPERQYITNINKSNAHYFTNEIKATHIYNAISGQQQTDFNTPVIQQYR</sequence>
<evidence type="ECO:0000255" key="1">
    <source>
        <dbReference type="HAMAP-Rule" id="MF_01539"/>
    </source>
</evidence>
<proteinExistence type="inferred from homology"/>
<organism>
    <name type="scientific">Staphylococcus aureus (strain NCTC 8325 / PS 47)</name>
    <dbReference type="NCBI Taxonomy" id="93061"/>
    <lineage>
        <taxon>Bacteria</taxon>
        <taxon>Bacillati</taxon>
        <taxon>Bacillota</taxon>
        <taxon>Bacilli</taxon>
        <taxon>Bacillales</taxon>
        <taxon>Staphylococcaceae</taxon>
        <taxon>Staphylococcus</taxon>
    </lineage>
</organism>
<dbReference type="EC" id="6.3.4.-" evidence="1"/>
<dbReference type="EMBL" id="CP000253">
    <property type="protein sequence ID" value="ABD30193.1"/>
    <property type="molecule type" value="Genomic_DNA"/>
</dbReference>
<dbReference type="RefSeq" id="WP_000843611.1">
    <property type="nucleotide sequence ID" value="NZ_LS483365.1"/>
</dbReference>
<dbReference type="RefSeq" id="YP_499622.1">
    <property type="nucleotide sequence ID" value="NC_007795.1"/>
</dbReference>
<dbReference type="SMR" id="Q2FZF4"/>
<dbReference type="STRING" id="93061.SAOUHSC_01076"/>
<dbReference type="PaxDb" id="1280-SAXN108_1121"/>
<dbReference type="GeneID" id="3919239"/>
<dbReference type="KEGG" id="sao:SAOUHSC_01076"/>
<dbReference type="PATRIC" id="fig|93061.5.peg.987"/>
<dbReference type="eggNOG" id="COG1323">
    <property type="taxonomic scope" value="Bacteria"/>
</dbReference>
<dbReference type="HOGENOM" id="CLU_038915_0_2_9"/>
<dbReference type="OrthoDB" id="9769796at2"/>
<dbReference type="PRO" id="PR:Q2FZF4"/>
<dbReference type="Proteomes" id="UP000008816">
    <property type="component" value="Chromosome"/>
</dbReference>
<dbReference type="GO" id="GO:0005737">
    <property type="term" value="C:cytoplasm"/>
    <property type="evidence" value="ECO:0007669"/>
    <property type="project" value="UniProtKB-SubCell"/>
</dbReference>
<dbReference type="GO" id="GO:0005524">
    <property type="term" value="F:ATP binding"/>
    <property type="evidence" value="ECO:0007669"/>
    <property type="project" value="UniProtKB-KW"/>
</dbReference>
<dbReference type="GO" id="GO:0016879">
    <property type="term" value="F:ligase activity, forming carbon-nitrogen bonds"/>
    <property type="evidence" value="ECO:0007669"/>
    <property type="project" value="UniProtKB-UniRule"/>
</dbReference>
<dbReference type="GO" id="GO:0000049">
    <property type="term" value="F:tRNA binding"/>
    <property type="evidence" value="ECO:0007669"/>
    <property type="project" value="UniProtKB-KW"/>
</dbReference>
<dbReference type="GO" id="GO:0006400">
    <property type="term" value="P:tRNA modification"/>
    <property type="evidence" value="ECO:0007669"/>
    <property type="project" value="UniProtKB-UniRule"/>
</dbReference>
<dbReference type="Gene3D" id="3.40.50.620">
    <property type="entry name" value="HUPs"/>
    <property type="match status" value="1"/>
</dbReference>
<dbReference type="HAMAP" id="MF_01539">
    <property type="entry name" value="TmcAL"/>
    <property type="match status" value="1"/>
</dbReference>
<dbReference type="InterPro" id="IPR014729">
    <property type="entry name" value="Rossmann-like_a/b/a_fold"/>
</dbReference>
<dbReference type="InterPro" id="IPR008513">
    <property type="entry name" value="tRNA(Met)_cyd_acetate_ligase"/>
</dbReference>
<dbReference type="NCBIfam" id="NF010191">
    <property type="entry name" value="PRK13670.1"/>
    <property type="match status" value="1"/>
</dbReference>
<dbReference type="PANTHER" id="PTHR37825">
    <property type="entry name" value="TRNA(MET) CYTIDINE ACETATE LIGASE"/>
    <property type="match status" value="1"/>
</dbReference>
<dbReference type="PANTHER" id="PTHR37825:SF1">
    <property type="entry name" value="TRNA(MET) CYTIDINE ACETATE LIGASE"/>
    <property type="match status" value="1"/>
</dbReference>
<dbReference type="Pfam" id="PF05636">
    <property type="entry name" value="HIGH_NTase1"/>
    <property type="match status" value="1"/>
</dbReference>
<dbReference type="SUPFAM" id="SSF52374">
    <property type="entry name" value="Nucleotidylyl transferase"/>
    <property type="match status" value="1"/>
</dbReference>
<reference key="1">
    <citation type="book" date="2006" name="Gram positive pathogens, 2nd edition">
        <title>The Staphylococcus aureus NCTC 8325 genome.</title>
        <editorList>
            <person name="Fischetti V."/>
            <person name="Novick R."/>
            <person name="Ferretti J."/>
            <person name="Portnoy D."/>
            <person name="Rood J."/>
        </editorList>
        <authorList>
            <person name="Gillaspy A.F."/>
            <person name="Worrell V."/>
            <person name="Orvis J."/>
            <person name="Roe B.A."/>
            <person name="Dyer D.W."/>
            <person name="Iandolo J.J."/>
        </authorList>
    </citation>
    <scope>NUCLEOTIDE SEQUENCE [LARGE SCALE GENOMIC DNA]</scope>
    <source>
        <strain>NCTC 8325 / PS 47</strain>
    </source>
</reference>
<accession>Q2FZF4</accession>